<reference key="1">
    <citation type="journal article" date="2010" name="Zoology">
        <title>Transcriptome analysis of the venom glands of the Chinese wolf spider Lycosa singoriensis.</title>
        <authorList>
            <person name="Zhang Y."/>
            <person name="Chen J."/>
            <person name="Tang X."/>
            <person name="Wang F."/>
            <person name="Jiang L."/>
            <person name="Xiong X."/>
            <person name="Wang M."/>
            <person name="Rong M."/>
            <person name="Liu Z."/>
            <person name="Liang S."/>
        </authorList>
    </citation>
    <scope>NUCLEOTIDE SEQUENCE [LARGE SCALE MRNA]</scope>
    <source>
        <tissue>Venom gland</tissue>
    </source>
</reference>
<keyword id="KW-1015">Disulfide bond</keyword>
<keyword id="KW-0960">Knottin</keyword>
<keyword id="KW-0964">Secreted</keyword>
<keyword id="KW-0732">Signal</keyword>
<keyword id="KW-0800">Toxin</keyword>
<proteinExistence type="inferred from homology"/>
<feature type="signal peptide" evidence="3">
    <location>
        <begin position="1"/>
        <end position="22"/>
    </location>
</feature>
<feature type="propeptide" id="PRO_0000401897" evidence="1">
    <location>
        <begin position="23"/>
        <end position="34"/>
    </location>
</feature>
<feature type="chain" id="PRO_0000401898" description="U16-lycotoxin-Ls1b">
    <location>
        <begin position="35"/>
        <end position="82"/>
    </location>
</feature>
<feature type="disulfide bond" evidence="2">
    <location>
        <begin position="36"/>
        <end position="51"/>
    </location>
</feature>
<feature type="disulfide bond" evidence="2">
    <location>
        <begin position="43"/>
        <end position="56"/>
    </location>
</feature>
<feature type="disulfide bond" evidence="2">
    <location>
        <begin position="50"/>
        <end position="67"/>
    </location>
</feature>
<feature type="disulfide bond" evidence="2">
    <location>
        <begin position="58"/>
        <end position="65"/>
    </location>
</feature>
<organism>
    <name type="scientific">Lycosa singoriensis</name>
    <name type="common">Wolf spider</name>
    <name type="synonym">Aranea singoriensis</name>
    <dbReference type="NCBI Taxonomy" id="434756"/>
    <lineage>
        <taxon>Eukaryota</taxon>
        <taxon>Metazoa</taxon>
        <taxon>Ecdysozoa</taxon>
        <taxon>Arthropoda</taxon>
        <taxon>Chelicerata</taxon>
        <taxon>Arachnida</taxon>
        <taxon>Araneae</taxon>
        <taxon>Araneomorphae</taxon>
        <taxon>Entelegynae</taxon>
        <taxon>Lycosoidea</taxon>
        <taxon>Lycosidae</taxon>
        <taxon>Lycosa</taxon>
    </lineage>
</organism>
<dbReference type="EMBL" id="EU926137">
    <property type="protein sequence ID" value="ACI41469.1"/>
    <property type="molecule type" value="mRNA"/>
</dbReference>
<dbReference type="EMBL" id="FM864141">
    <property type="protein sequence ID" value="CAS03738.1"/>
    <property type="molecule type" value="mRNA"/>
</dbReference>
<dbReference type="SMR" id="B6DD53"/>
<dbReference type="ArachnoServer" id="AS001076">
    <property type="toxin name" value="U16-lycotoxin-Ls1b"/>
</dbReference>
<dbReference type="GO" id="GO:0005576">
    <property type="term" value="C:extracellular region"/>
    <property type="evidence" value="ECO:0007669"/>
    <property type="project" value="UniProtKB-SubCell"/>
</dbReference>
<dbReference type="GO" id="GO:0008200">
    <property type="term" value="F:ion channel inhibitor activity"/>
    <property type="evidence" value="ECO:0007669"/>
    <property type="project" value="InterPro"/>
</dbReference>
<dbReference type="GO" id="GO:0090729">
    <property type="term" value="F:toxin activity"/>
    <property type="evidence" value="ECO:0007669"/>
    <property type="project" value="UniProtKB-KW"/>
</dbReference>
<dbReference type="CDD" id="cd12960">
    <property type="entry name" value="Spider_toxin"/>
    <property type="match status" value="1"/>
</dbReference>
<dbReference type="Gene3D" id="4.10.40.10">
    <property type="match status" value="1"/>
</dbReference>
<dbReference type="InterPro" id="IPR004169">
    <property type="entry name" value="Spidertoxin"/>
</dbReference>
<dbReference type="Pfam" id="PF02819">
    <property type="entry name" value="Toxin_9"/>
    <property type="match status" value="1"/>
</dbReference>
<dbReference type="SUPFAM" id="SSF57059">
    <property type="entry name" value="omega toxin-like"/>
    <property type="match status" value="1"/>
</dbReference>
<protein>
    <recommendedName>
        <fullName evidence="4">U16-lycotoxin-Ls1b</fullName>
        <shortName evidence="4">U16-LCTX-Ls1b</shortName>
    </recommendedName>
    <alternativeName>
        <fullName>Toxin-like structure LSTX-P2</fullName>
    </alternativeName>
</protein>
<accession>B6DD53</accession>
<sequence length="82" mass="9393">MSPKVQALLLLVGLITFLEVHAEEELSETVESERSCAKEYQWCDWNTRPCCDNISCICSWIGTNCECKKGIICTIKDWYKGK</sequence>
<comment type="subcellular location">
    <subcellularLocation>
        <location evidence="5">Secreted</location>
    </subcellularLocation>
</comment>
<comment type="tissue specificity">
    <text evidence="5">Expressed by the venom gland.</text>
</comment>
<comment type="domain">
    <text evidence="2">The presence of a 'disulfide through disulfide knot' structurally defines this protein as a knottin.</text>
</comment>
<comment type="similarity">
    <text evidence="4">Belongs to the neurotoxin 02 (plectoxin) family. 04 (U16-lycotoxin) subfamily.</text>
</comment>
<name>TX24B_LYCSI</name>
<evidence type="ECO:0000250" key="1"/>
<evidence type="ECO:0000250" key="2">
    <source>
        <dbReference type="UniProtKB" id="P30288"/>
    </source>
</evidence>
<evidence type="ECO:0000255" key="3"/>
<evidence type="ECO:0000305" key="4"/>
<evidence type="ECO:0000305" key="5">
    <source>
    </source>
</evidence>